<sequence>MSNNFKDDFEKNRQSIDTNSHQDHTEDVEKDQSELEHQDTIENTEQQFPPRNAQRRKRRRDLATNHNKQVHNESQTSEDNVQNEAGTIDDRQVESSHSTESQEPSHQDSTPQHEEEYYNKNAFAMDKSHPEPIEDNDKHETIKDAENNTEHSTVSDKSIAEQSQQPKPYFATGANQANTSKDKHDDVTVKQDKDESKDHHSGKKGAAIGAGTAGVAGAAGAMGVSKAKKHSNDAQNKSNSDKSNNSTEDKASQDKSKDHHNGKKGAAIGAGTAGLAGGAASKSASAASKPHASNNASQNHDEHDNHDRDKERKKGGMAKVLLPLIAAVLIIGALAIFGGMALNNHNNGTKENKIANTNKNNADESKDKDTSKDASKDKSKSTDSDKSKEDQDKATKDESDNDQNNANQANNQAQNNQNQQQANQNQQQQQQRQGGGQRHTVNGQENLYRIAIQYYGSGSPENVEKIRRANGLSGNNIRNGQQIVIP</sequence>
<feature type="initiator methionine" description="Removed" evidence="1">
    <location>
        <position position="1"/>
    </location>
</feature>
<feature type="chain" id="PRO_0000271738" description="Elastin-binding protein EbpS">
    <location>
        <begin position="2"/>
        <end position="486"/>
    </location>
</feature>
<feature type="topological domain" description="Extracellular" evidence="2">
    <location>
        <begin position="2"/>
        <end position="204"/>
    </location>
</feature>
<feature type="transmembrane region" description="Helical" evidence="2">
    <location>
        <begin position="205"/>
        <end position="225"/>
    </location>
</feature>
<feature type="topological domain" description="Cytoplasmic" evidence="2">
    <location>
        <begin position="226"/>
        <end position="319"/>
    </location>
</feature>
<feature type="transmembrane region" description="Helical" evidence="2">
    <location>
        <begin position="320"/>
        <end position="340"/>
    </location>
</feature>
<feature type="topological domain" description="Extracellular" evidence="2">
    <location>
        <begin position="341"/>
        <end position="486"/>
    </location>
</feature>
<feature type="domain" description="LysM" evidence="3">
    <location>
        <begin position="437"/>
        <end position="485"/>
    </location>
</feature>
<feature type="region of interest" description="Disordered" evidence="4">
    <location>
        <begin position="1"/>
        <end position="314"/>
    </location>
</feature>
<feature type="region of interest" description="Elastin-binding" evidence="1">
    <location>
        <begin position="14"/>
        <end position="34"/>
    </location>
</feature>
<feature type="region of interest" description="Disordered" evidence="4">
    <location>
        <begin position="351"/>
        <end position="440"/>
    </location>
</feature>
<feature type="compositionally biased region" description="Basic and acidic residues" evidence="4">
    <location>
        <begin position="1"/>
        <end position="40"/>
    </location>
</feature>
<feature type="compositionally biased region" description="Polar residues" evidence="4">
    <location>
        <begin position="64"/>
        <end position="85"/>
    </location>
</feature>
<feature type="compositionally biased region" description="Basic and acidic residues" evidence="4">
    <location>
        <begin position="103"/>
        <end position="118"/>
    </location>
</feature>
<feature type="compositionally biased region" description="Basic and acidic residues" evidence="4">
    <location>
        <begin position="126"/>
        <end position="149"/>
    </location>
</feature>
<feature type="compositionally biased region" description="Polar residues" evidence="4">
    <location>
        <begin position="150"/>
        <end position="166"/>
    </location>
</feature>
<feature type="compositionally biased region" description="Basic and acidic residues" evidence="4">
    <location>
        <begin position="180"/>
        <end position="199"/>
    </location>
</feature>
<feature type="compositionally biased region" description="Low complexity" evidence="4">
    <location>
        <begin position="204"/>
        <end position="225"/>
    </location>
</feature>
<feature type="compositionally biased region" description="Low complexity" evidence="4">
    <location>
        <begin position="233"/>
        <end position="246"/>
    </location>
</feature>
<feature type="compositionally biased region" description="Basic and acidic residues" evidence="4">
    <location>
        <begin position="247"/>
        <end position="259"/>
    </location>
</feature>
<feature type="compositionally biased region" description="Low complexity" evidence="4">
    <location>
        <begin position="278"/>
        <end position="297"/>
    </location>
</feature>
<feature type="compositionally biased region" description="Basic and acidic residues" evidence="4">
    <location>
        <begin position="299"/>
        <end position="314"/>
    </location>
</feature>
<feature type="compositionally biased region" description="Basic and acidic residues" evidence="4">
    <location>
        <begin position="361"/>
        <end position="398"/>
    </location>
</feature>
<feature type="compositionally biased region" description="Low complexity" evidence="4">
    <location>
        <begin position="403"/>
        <end position="431"/>
    </location>
</feature>
<name>EBPS_STAAN</name>
<comment type="function">
    <text evidence="1">Promotes binding of soluble elastin peptides and tropoelastin to S.aureus cells although it is not able to promote bacterial adherence to immobilized elastin and, therefore, is not a microbial surface component recognizing adhesive matrix molecule (MSCRAMM).</text>
</comment>
<comment type="subcellular location">
    <subcellularLocation>
        <location evidence="5">Cell membrane</location>
        <topology evidence="1">Multi-pass membrane protein</topology>
    </subcellularLocation>
    <subcellularLocation>
        <location evidence="5">Membrane raft</location>
        <topology evidence="2">Multi-pass membrane protein</topology>
    </subcellularLocation>
    <text evidence="5">Present in detergent-resistant membrane (DRM) fractions that may be equivalent to eukaryotic membrane rafts; these rafts include proteins involved in signaling, molecule trafficking and protein secretion.</text>
</comment>
<comment type="domain">
    <text evidence="1">The elastin-binding domain is located between residues 13-33 at the surface-exposed N-terminus, whereas the C-terminus, containing the LysM peptidoglycan-binding domain, is not exposed on the surface of intact cells and presumably remains buried within the peptidoglycan. The presence of the TNSHQD sequence, corresponding to residues 18-23, is essential for EbpS activity but not sufficient, additional flanking amino acids in the amino- or carboxy-terminal are required for elastin recognition (By similarity).</text>
</comment>
<keyword id="KW-1003">Cell membrane</keyword>
<keyword id="KW-0472">Membrane</keyword>
<keyword id="KW-0812">Transmembrane</keyword>
<keyword id="KW-1133">Transmembrane helix</keyword>
<organism>
    <name type="scientific">Staphylococcus aureus (strain N315)</name>
    <dbReference type="NCBI Taxonomy" id="158879"/>
    <lineage>
        <taxon>Bacteria</taxon>
        <taxon>Bacillati</taxon>
        <taxon>Bacillota</taxon>
        <taxon>Bacilli</taxon>
        <taxon>Bacillales</taxon>
        <taxon>Staphylococcaceae</taxon>
        <taxon>Staphylococcus</taxon>
    </lineage>
</organism>
<reference key="1">
    <citation type="journal article" date="2001" name="Lancet">
        <title>Whole genome sequencing of meticillin-resistant Staphylococcus aureus.</title>
        <authorList>
            <person name="Kuroda M."/>
            <person name="Ohta T."/>
            <person name="Uchiyama I."/>
            <person name="Baba T."/>
            <person name="Yuzawa H."/>
            <person name="Kobayashi I."/>
            <person name="Cui L."/>
            <person name="Oguchi A."/>
            <person name="Aoki K."/>
            <person name="Nagai Y."/>
            <person name="Lian J.-Q."/>
            <person name="Ito T."/>
            <person name="Kanamori M."/>
            <person name="Matsumaru H."/>
            <person name="Maruyama A."/>
            <person name="Murakami H."/>
            <person name="Hosoyama A."/>
            <person name="Mizutani-Ui Y."/>
            <person name="Takahashi N.K."/>
            <person name="Sawano T."/>
            <person name="Inoue R."/>
            <person name="Kaito C."/>
            <person name="Sekimizu K."/>
            <person name="Hirakawa H."/>
            <person name="Kuhara S."/>
            <person name="Goto S."/>
            <person name="Yabuzaki J."/>
            <person name="Kanehisa M."/>
            <person name="Yamashita A."/>
            <person name="Oshima K."/>
            <person name="Furuya K."/>
            <person name="Yoshino C."/>
            <person name="Shiba T."/>
            <person name="Hattori M."/>
            <person name="Ogasawara N."/>
            <person name="Hayashi H."/>
            <person name="Hiramatsu K."/>
        </authorList>
    </citation>
    <scope>NUCLEOTIDE SEQUENCE [LARGE SCALE GENOMIC DNA]</scope>
    <source>
        <strain>N315</strain>
    </source>
</reference>
<reference key="2">
    <citation type="submission" date="2007-10" db="UniProtKB">
        <title>Shotgun proteomic analysis of total and membrane protein extracts of S. aureus strain N315.</title>
        <authorList>
            <person name="Vaezzadeh A.R."/>
            <person name="Deshusses J."/>
            <person name="Lescuyer P."/>
            <person name="Hochstrasser D.F."/>
        </authorList>
    </citation>
    <scope>IDENTIFICATION BY MASS SPECTROMETRY [LARGE SCALE ANALYSIS]</scope>
    <source>
        <strain>N315</strain>
    </source>
</reference>
<reference key="3">
    <citation type="journal article" date="2010" name="Genes Dev.">
        <title>Functional microdomains in bacterial membranes.</title>
        <authorList>
            <person name="Lopez D."/>
            <person name="Kolter R."/>
        </authorList>
    </citation>
    <scope>IDENTIFICATION BY MASS SPECTROMETRY</scope>
    <scope>SUBCELLULAR LOCATION</scope>
</reference>
<proteinExistence type="evidence at protein level"/>
<gene>
    <name type="primary">ebpS</name>
    <name type="ordered locus">SA1312</name>
</gene>
<dbReference type="EMBL" id="BA000018">
    <property type="protein sequence ID" value="BAB42574.1"/>
    <property type="molecule type" value="Genomic_DNA"/>
</dbReference>
<dbReference type="PIR" id="A89927">
    <property type="entry name" value="A89927"/>
</dbReference>
<dbReference type="RefSeq" id="WP_000069289.1">
    <property type="nucleotide sequence ID" value="NC_002745.2"/>
</dbReference>
<dbReference type="SMR" id="Q7A5I6"/>
<dbReference type="EnsemblBacteria" id="BAB42574">
    <property type="protein sequence ID" value="BAB42574"/>
    <property type="gene ID" value="BAB42574"/>
</dbReference>
<dbReference type="KEGG" id="sau:SA1312"/>
<dbReference type="HOGENOM" id="CLU_043950_0_0_9"/>
<dbReference type="GO" id="GO:0045121">
    <property type="term" value="C:membrane raft"/>
    <property type="evidence" value="ECO:0007669"/>
    <property type="project" value="UniProtKB-SubCell"/>
</dbReference>
<dbReference type="GO" id="GO:0005886">
    <property type="term" value="C:plasma membrane"/>
    <property type="evidence" value="ECO:0007669"/>
    <property type="project" value="UniProtKB-SubCell"/>
</dbReference>
<dbReference type="CDD" id="cd00118">
    <property type="entry name" value="LysM"/>
    <property type="match status" value="1"/>
</dbReference>
<dbReference type="Gene3D" id="3.10.350.10">
    <property type="entry name" value="LysM domain"/>
    <property type="match status" value="1"/>
</dbReference>
<dbReference type="InterPro" id="IPR018392">
    <property type="entry name" value="LysM_dom"/>
</dbReference>
<dbReference type="InterPro" id="IPR036779">
    <property type="entry name" value="LysM_dom_sf"/>
</dbReference>
<dbReference type="NCBIfam" id="NF033598">
    <property type="entry name" value="elast_bind_EbpS"/>
    <property type="match status" value="1"/>
</dbReference>
<dbReference type="Pfam" id="PF01476">
    <property type="entry name" value="LysM"/>
    <property type="match status" value="1"/>
</dbReference>
<dbReference type="SMART" id="SM00257">
    <property type="entry name" value="LysM"/>
    <property type="match status" value="1"/>
</dbReference>
<dbReference type="SUPFAM" id="SSF54106">
    <property type="entry name" value="LysM domain"/>
    <property type="match status" value="1"/>
</dbReference>
<dbReference type="PROSITE" id="PS51782">
    <property type="entry name" value="LYSM"/>
    <property type="match status" value="1"/>
</dbReference>
<protein>
    <recommendedName>
        <fullName>Elastin-binding protein EbpS</fullName>
    </recommendedName>
</protein>
<evidence type="ECO:0000250" key="1"/>
<evidence type="ECO:0000255" key="2"/>
<evidence type="ECO:0000255" key="3">
    <source>
        <dbReference type="PROSITE-ProRule" id="PRU01118"/>
    </source>
</evidence>
<evidence type="ECO:0000256" key="4">
    <source>
        <dbReference type="SAM" id="MobiDB-lite"/>
    </source>
</evidence>
<evidence type="ECO:0000269" key="5">
    <source>
    </source>
</evidence>
<accession>Q7A5I6</accession>